<gene>
    <name type="primary">Lrrfip1</name>
</gene>
<keyword id="KW-0007">Acetylation</keyword>
<keyword id="KW-0175">Coiled coil</keyword>
<keyword id="KW-0963">Cytoplasm</keyword>
<keyword id="KW-0238">DNA-binding</keyword>
<keyword id="KW-1017">Isopeptide bond</keyword>
<keyword id="KW-0539">Nucleus</keyword>
<keyword id="KW-0597">Phosphoprotein</keyword>
<keyword id="KW-1185">Reference proteome</keyword>
<keyword id="KW-0678">Repressor</keyword>
<keyword id="KW-0804">Transcription</keyword>
<keyword id="KW-0805">Transcription regulation</keyword>
<keyword id="KW-0832">Ubl conjugation</keyword>
<feature type="initiator methionine" description="Removed" evidence="2">
    <location>
        <position position="1"/>
    </location>
</feature>
<feature type="chain" id="PRO_0000248394" description="Leucine-rich repeat flightless-interacting protein 1">
    <location>
        <begin position="2"/>
        <end position="738"/>
    </location>
</feature>
<feature type="region of interest" description="Disordered" evidence="4">
    <location>
        <begin position="40"/>
        <end position="98"/>
    </location>
</feature>
<feature type="region of interest" description="Disordered" evidence="4">
    <location>
        <begin position="253"/>
        <end position="738"/>
    </location>
</feature>
<feature type="region of interest" description="DNA-binding" evidence="1">
    <location>
        <begin position="479"/>
        <end position="580"/>
    </location>
</feature>
<feature type="coiled-coil region" evidence="1">
    <location>
        <begin position="94"/>
        <end position="194"/>
    </location>
</feature>
<feature type="compositionally biased region" description="Basic and acidic residues" evidence="4">
    <location>
        <begin position="40"/>
        <end position="65"/>
    </location>
</feature>
<feature type="compositionally biased region" description="Low complexity" evidence="4">
    <location>
        <begin position="78"/>
        <end position="94"/>
    </location>
</feature>
<feature type="compositionally biased region" description="Basic and acidic residues" evidence="4">
    <location>
        <begin position="253"/>
        <end position="262"/>
    </location>
</feature>
<feature type="compositionally biased region" description="Basic and acidic residues" evidence="4">
    <location>
        <begin position="277"/>
        <end position="297"/>
    </location>
</feature>
<feature type="compositionally biased region" description="Polar residues" evidence="4">
    <location>
        <begin position="314"/>
        <end position="326"/>
    </location>
</feature>
<feature type="compositionally biased region" description="Basic and acidic residues" evidence="4">
    <location>
        <begin position="330"/>
        <end position="347"/>
    </location>
</feature>
<feature type="compositionally biased region" description="Polar residues" evidence="4">
    <location>
        <begin position="371"/>
        <end position="380"/>
    </location>
</feature>
<feature type="compositionally biased region" description="Basic and acidic residues" evidence="4">
    <location>
        <begin position="381"/>
        <end position="400"/>
    </location>
</feature>
<feature type="compositionally biased region" description="Basic and acidic residues" evidence="4">
    <location>
        <begin position="467"/>
        <end position="476"/>
    </location>
</feature>
<feature type="compositionally biased region" description="Polar residues" evidence="4">
    <location>
        <begin position="483"/>
        <end position="495"/>
    </location>
</feature>
<feature type="compositionally biased region" description="Polar residues" evidence="4">
    <location>
        <begin position="520"/>
        <end position="534"/>
    </location>
</feature>
<feature type="compositionally biased region" description="Basic and acidic residues" evidence="4">
    <location>
        <begin position="535"/>
        <end position="553"/>
    </location>
</feature>
<feature type="compositionally biased region" description="Basic residues" evidence="4">
    <location>
        <begin position="563"/>
        <end position="577"/>
    </location>
</feature>
<feature type="compositionally biased region" description="Basic and acidic residues" evidence="4">
    <location>
        <begin position="606"/>
        <end position="626"/>
    </location>
</feature>
<feature type="compositionally biased region" description="Basic and acidic residues" evidence="4">
    <location>
        <begin position="691"/>
        <end position="703"/>
    </location>
</feature>
<feature type="compositionally biased region" description="Basic and acidic residues" evidence="4">
    <location>
        <begin position="720"/>
        <end position="738"/>
    </location>
</feature>
<feature type="modified residue" description="N-acetylthreonine" evidence="2">
    <location>
        <position position="2"/>
    </location>
</feature>
<feature type="modified residue" description="Phosphoserine" evidence="2">
    <location>
        <position position="16"/>
    </location>
</feature>
<feature type="modified residue" description="Phosphoserine" evidence="2">
    <location>
        <position position="83"/>
    </location>
</feature>
<feature type="modified residue" description="Phosphoserine" evidence="2">
    <location>
        <position position="84"/>
    </location>
</feature>
<feature type="modified residue" description="Phosphoserine" evidence="2">
    <location>
        <position position="88"/>
    </location>
</feature>
<feature type="modified residue" description="Phosphoserine" evidence="3">
    <location>
        <position position="92"/>
    </location>
</feature>
<feature type="modified residue" description="Phosphoserine" evidence="7">
    <location>
        <position position="302"/>
    </location>
</feature>
<feature type="modified residue" description="Phosphoserine" evidence="3">
    <location>
        <position position="346"/>
    </location>
</feature>
<feature type="modified residue" description="Phosphoserine" evidence="3">
    <location>
        <position position="348"/>
    </location>
</feature>
<feature type="modified residue" description="Phosphoserine" evidence="2">
    <location>
        <position position="551"/>
    </location>
</feature>
<feature type="modified residue" description="Phosphoserine" evidence="7">
    <location>
        <position position="560"/>
    </location>
</feature>
<feature type="modified residue" description="Phosphoserine" evidence="7">
    <location>
        <position position="675"/>
    </location>
</feature>
<feature type="modified residue" description="Phosphoserine" evidence="2">
    <location>
        <position position="701"/>
    </location>
</feature>
<feature type="cross-link" description="Glycyl lysine isopeptide (Lys-Gly) (interchain with G-Cter in SUMO1)" evidence="2">
    <location>
        <position position="249"/>
    </location>
</feature>
<protein>
    <recommendedName>
        <fullName>Leucine-rich repeat flightless-interacting protein 1</fullName>
        <shortName>LRR FLII-interacting protein 1</shortName>
    </recommendedName>
</protein>
<sequence length="738" mass="80019">MTSPEGAQNKEIDCLSPEAQRLAEARLAAKRAARAEAREIRMKELERQQKEVEERPDKDFAEKGSRNMPSLSAATLASLGGTSSRRGSGDTSISMDTEASIREIKDSLAEVEEKYKKAMVSNAQLDNEKTNFMYQVDTLKDMLLELEEQLAESQRQYEEKNKEFEREKHAHSILQFQFAEVKEALRQREEMLEKHGIILNSEIATNGETSDTVNDVGYQAPTKITKEELNALKAAGEGTLGKAKEVEVKKEIVEKVGQRETLQDSEQEQPKLNTGKDCVDRGVLHPGEKAENQRPVEDSALSPGPLAGAKCEQEVQSQDQENTSILKSPEQIESHEVTNKSDSRDSNSPEPSSCRGGLDSEVSGPTALGIKNQSENSMDSQGKENQEDLGKGSFEPRPDHVLGQTPEIDKVSCTDSRGTGGNHLEDVVQAGDTIVEDQVGTMASAEQSKSMENHIGRSLNDGLGQSSERELAHEAAELEEALTQSSQAGGENTVTEAEDAAVRDEKPLQADVQATPAAPTVQSGHQDTTGPGSTDTKHTSPHAKERNKAKSEQQAEALDSPQKKTKNKKKKNKKKKAAAPMETCKDANEESSCQDPDVGDGEEEERVQATDKKWAAETPELKEDPQSRPSGKQNDAEEDSGPAEGPTDVLDQNSLQCADGDISPVGRKGPQRDASQIGGEEGLVPSQHPGQADEKGIEGHSVDNSDLSGELGGFNSESGEQAREEVGNSKSKEDCTMS</sequence>
<evidence type="ECO:0000250" key="1"/>
<evidence type="ECO:0000250" key="2">
    <source>
        <dbReference type="UniProtKB" id="Q32MZ4"/>
    </source>
</evidence>
<evidence type="ECO:0000250" key="3">
    <source>
        <dbReference type="UniProtKB" id="Q3UZ39"/>
    </source>
</evidence>
<evidence type="ECO:0000256" key="4">
    <source>
        <dbReference type="SAM" id="MobiDB-lite"/>
    </source>
</evidence>
<evidence type="ECO:0000269" key="5">
    <source>
    </source>
</evidence>
<evidence type="ECO:0000305" key="6"/>
<evidence type="ECO:0007744" key="7">
    <source>
    </source>
</evidence>
<dbReference type="EMBL" id="BC081883">
    <property type="protein sequence ID" value="AAH81883.1"/>
    <property type="molecule type" value="mRNA"/>
</dbReference>
<dbReference type="RefSeq" id="NP_001014291.1">
    <property type="nucleotide sequence ID" value="NM_001014269.1"/>
</dbReference>
<dbReference type="SMR" id="Q66HF9"/>
<dbReference type="BioGRID" id="266442">
    <property type="interactions" value="1"/>
</dbReference>
<dbReference type="FunCoup" id="Q66HF9">
    <property type="interactions" value="719"/>
</dbReference>
<dbReference type="STRING" id="10116.ENSRNOP00000045021"/>
<dbReference type="GlyGen" id="Q66HF9">
    <property type="glycosylation" value="1 site"/>
</dbReference>
<dbReference type="iPTMnet" id="Q66HF9"/>
<dbReference type="PhosphoSitePlus" id="Q66HF9"/>
<dbReference type="jPOST" id="Q66HF9"/>
<dbReference type="PaxDb" id="10116-ENSRNOP00000045021"/>
<dbReference type="GeneID" id="367314"/>
<dbReference type="KEGG" id="rno:367314"/>
<dbReference type="UCSC" id="RGD:1359548">
    <property type="organism name" value="rat"/>
</dbReference>
<dbReference type="AGR" id="RGD:1359548"/>
<dbReference type="CTD" id="9208"/>
<dbReference type="RGD" id="1359548">
    <property type="gene designation" value="Lrrfip1"/>
</dbReference>
<dbReference type="VEuPathDB" id="HostDB:ENSRNOG00000019892"/>
<dbReference type="eggNOG" id="KOG2010">
    <property type="taxonomic scope" value="Eukaryota"/>
</dbReference>
<dbReference type="HOGENOM" id="CLU_018924_0_0_1"/>
<dbReference type="InParanoid" id="Q66HF9"/>
<dbReference type="OrthoDB" id="10028421at2759"/>
<dbReference type="PhylomeDB" id="Q66HF9"/>
<dbReference type="TreeFam" id="TF314109"/>
<dbReference type="PRO" id="PR:Q66HF9"/>
<dbReference type="Proteomes" id="UP000002494">
    <property type="component" value="Chromosome 9"/>
</dbReference>
<dbReference type="Bgee" id="ENSRNOG00000019892">
    <property type="expression patterns" value="Expressed in lung and 19 other cell types or tissues"/>
</dbReference>
<dbReference type="GO" id="GO:0005737">
    <property type="term" value="C:cytoplasm"/>
    <property type="evidence" value="ECO:0007669"/>
    <property type="project" value="UniProtKB-SubCell"/>
</dbReference>
<dbReference type="GO" id="GO:0005634">
    <property type="term" value="C:nucleus"/>
    <property type="evidence" value="ECO:0007669"/>
    <property type="project" value="UniProtKB-SubCell"/>
</dbReference>
<dbReference type="GO" id="GO:0003677">
    <property type="term" value="F:DNA binding"/>
    <property type="evidence" value="ECO:0000250"/>
    <property type="project" value="UniProtKB"/>
</dbReference>
<dbReference type="GO" id="GO:0000981">
    <property type="term" value="F:DNA-binding transcription factor activity, RNA polymerase II-specific"/>
    <property type="evidence" value="ECO:0000318"/>
    <property type="project" value="GO_Central"/>
</dbReference>
<dbReference type="GO" id="GO:0001227">
    <property type="term" value="F:DNA-binding transcription repressor activity, RNA polymerase II-specific"/>
    <property type="evidence" value="ECO:0000266"/>
    <property type="project" value="RGD"/>
</dbReference>
<dbReference type="GO" id="GO:0042803">
    <property type="term" value="F:protein homodimerization activity"/>
    <property type="evidence" value="ECO:0000266"/>
    <property type="project" value="RGD"/>
</dbReference>
<dbReference type="GO" id="GO:0000978">
    <property type="term" value="F:RNA polymerase II cis-regulatory region sequence-specific DNA binding"/>
    <property type="evidence" value="ECO:0000266"/>
    <property type="project" value="RGD"/>
</dbReference>
<dbReference type="GO" id="GO:0000122">
    <property type="term" value="P:negative regulation of transcription by RNA polymerase II"/>
    <property type="evidence" value="ECO:0000266"/>
    <property type="project" value="RGD"/>
</dbReference>
<dbReference type="GO" id="GO:0006357">
    <property type="term" value="P:regulation of transcription by RNA polymerase II"/>
    <property type="evidence" value="ECO:0000318"/>
    <property type="project" value="GO_Central"/>
</dbReference>
<dbReference type="FunFam" id="1.20.5.4090:FF:000001">
    <property type="entry name" value="leucine-rich repeat flightless-interacting protein 2 isoform X1"/>
    <property type="match status" value="1"/>
</dbReference>
<dbReference type="Gene3D" id="1.20.5.4090">
    <property type="match status" value="1"/>
</dbReference>
<dbReference type="InterPro" id="IPR019139">
    <property type="entry name" value="LRRFIP1/2"/>
</dbReference>
<dbReference type="PANTHER" id="PTHR19212">
    <property type="entry name" value="LEUCINE RICH REPEAT IN FLII INTERACTING PROTEIN"/>
    <property type="match status" value="1"/>
</dbReference>
<dbReference type="PANTHER" id="PTHR19212:SF5">
    <property type="entry name" value="LEUCINE-RICH REPEAT FLIGHTLESS-INTERACTING PROTEIN 1"/>
    <property type="match status" value="1"/>
</dbReference>
<dbReference type="Pfam" id="PF09738">
    <property type="entry name" value="LRRFIP"/>
    <property type="match status" value="1"/>
</dbReference>
<name>LRRF1_RAT</name>
<accession>Q66HF9</accession>
<reference key="1">
    <citation type="journal article" date="2004" name="Genome Res.">
        <title>The status, quality, and expansion of the NIH full-length cDNA project: the Mammalian Gene Collection (MGC).</title>
        <authorList>
            <consortium name="The MGC Project Team"/>
        </authorList>
    </citation>
    <scope>NUCLEOTIDE SEQUENCE [LARGE SCALE MRNA]</scope>
    <source>
        <strain>Brown Norway</strain>
        <tissue>Kidney</tissue>
    </source>
</reference>
<reference key="2">
    <citation type="journal article" date="1999" name="Circ. Res.">
        <title>GC factor 2 represses platelet-derived growth factor A-chain gene transcription and is itself induced by arterial injury.</title>
        <authorList>
            <person name="Khachigian L.M."/>
            <person name="Santiago F.S."/>
            <person name="Rafty L.A."/>
            <person name="Chan O.L.-W."/>
            <person name="Delbridge G.J."/>
            <person name="Bobik A."/>
            <person name="Collins T."/>
            <person name="Johnson A.C."/>
        </authorList>
    </citation>
    <scope>FUNCTION</scope>
    <scope>INDUCTION</scope>
</reference>
<reference key="3">
    <citation type="journal article" date="2012" name="Nat. Commun.">
        <title>Quantitative maps of protein phosphorylation sites across 14 different rat organs and tissues.</title>
        <authorList>
            <person name="Lundby A."/>
            <person name="Secher A."/>
            <person name="Lage K."/>
            <person name="Nordsborg N.B."/>
            <person name="Dmytriyev A."/>
            <person name="Lundby C."/>
            <person name="Olsen J.V."/>
        </authorList>
    </citation>
    <scope>PHOSPHORYLATION [LARGE SCALE ANALYSIS] AT SER-302; SER-560 AND SER-675</scope>
    <scope>IDENTIFICATION BY MASS SPECTROMETRY [LARGE SCALE ANALYSIS]</scope>
</reference>
<organism>
    <name type="scientific">Rattus norvegicus</name>
    <name type="common">Rat</name>
    <dbReference type="NCBI Taxonomy" id="10116"/>
    <lineage>
        <taxon>Eukaryota</taxon>
        <taxon>Metazoa</taxon>
        <taxon>Chordata</taxon>
        <taxon>Craniata</taxon>
        <taxon>Vertebrata</taxon>
        <taxon>Euteleostomi</taxon>
        <taxon>Mammalia</taxon>
        <taxon>Eutheria</taxon>
        <taxon>Euarchontoglires</taxon>
        <taxon>Glires</taxon>
        <taxon>Rodentia</taxon>
        <taxon>Myomorpha</taxon>
        <taxon>Muroidea</taxon>
        <taxon>Muridae</taxon>
        <taxon>Murinae</taxon>
        <taxon>Rattus</taxon>
    </lineage>
</organism>
<proteinExistence type="evidence at protein level"/>
<comment type="function">
    <text evidence="1 5">Transcriptional repressor which preferentially binds to the GC-rich consensus sequence (5'-AGCCCCCGGCG-3') and may regulate expression of TNF, EGFR and PDGFA. May control smooth muscle cells proliferation following artery injury through PDGFA repression. May also bind double-stranded RNA. Positively regulates Toll-like receptor (TLR) signaling in response to agonist probably by competing with the negative FLII regulator for MYD88-binding (By similarity).</text>
</comment>
<comment type="subunit">
    <text evidence="1">Homodimer. May also form higher oligomers. Interacts with FLII (By similarity). Interacts with MYD88 (By similarity). Competes with FLII for MyD88-binding, even in the absence of LPS (By similarity).</text>
</comment>
<comment type="subcellular location">
    <subcellularLocation>
        <location>Nucleus</location>
    </subcellularLocation>
    <subcellularLocation>
        <location evidence="1">Cytoplasm</location>
    </subcellularLocation>
</comment>
<comment type="induction">
    <text evidence="5">Up-regulated after artery wall injury (at protein level).</text>
</comment>
<comment type="domain">
    <text evidence="1">The DNA-binding domain is intrinsically unstructured.</text>
</comment>
<comment type="domain">
    <text evidence="1">The coiled coil mediates dimerization.</text>
</comment>
<comment type="similarity">
    <text evidence="6">Belongs to the LRRFIP family.</text>
</comment>